<organism>
    <name type="scientific">Porphyromonas gingivalis (strain ATCC BAA-308 / W83)</name>
    <dbReference type="NCBI Taxonomy" id="242619"/>
    <lineage>
        <taxon>Bacteria</taxon>
        <taxon>Pseudomonadati</taxon>
        <taxon>Bacteroidota</taxon>
        <taxon>Bacteroidia</taxon>
        <taxon>Bacteroidales</taxon>
        <taxon>Porphyromonadaceae</taxon>
        <taxon>Porphyromonas</taxon>
    </lineage>
</organism>
<reference key="1">
    <citation type="journal article" date="2003" name="J. Bacteriol.">
        <title>Complete genome sequence of the oral pathogenic bacterium Porphyromonas gingivalis strain W83.</title>
        <authorList>
            <person name="Nelson K.E."/>
            <person name="Fleischmann R.D."/>
            <person name="DeBoy R.T."/>
            <person name="Paulsen I.T."/>
            <person name="Fouts D.E."/>
            <person name="Eisen J.A."/>
            <person name="Daugherty S.C."/>
            <person name="Dodson R.J."/>
            <person name="Durkin A.S."/>
            <person name="Gwinn M.L."/>
            <person name="Haft D.H."/>
            <person name="Kolonay J.F."/>
            <person name="Nelson W.C."/>
            <person name="Mason T.M."/>
            <person name="Tallon L."/>
            <person name="Gray J."/>
            <person name="Granger D."/>
            <person name="Tettelin H."/>
            <person name="Dong H."/>
            <person name="Galvin J.L."/>
            <person name="Duncan M.J."/>
            <person name="Dewhirst F.E."/>
            <person name="Fraser C.M."/>
        </authorList>
    </citation>
    <scope>NUCLEOTIDE SEQUENCE [LARGE SCALE GENOMIC DNA]</scope>
    <source>
        <strain>ATCC BAA-308 / W83</strain>
    </source>
</reference>
<comment type="function">
    <text evidence="1">One of the primary rRNA binding proteins, it binds directly near the 3'-end of the 23S rRNA, where it nucleates assembly of the 50S subunit.</text>
</comment>
<comment type="subunit">
    <text evidence="1">Part of the 50S ribosomal subunit. Forms a cluster with proteins L14 and L19.</text>
</comment>
<comment type="similarity">
    <text evidence="1">Belongs to the universal ribosomal protein uL3 family.</text>
</comment>
<dbReference type="EMBL" id="AE015924">
    <property type="protein sequence ID" value="AAQ66919.1"/>
    <property type="molecule type" value="Genomic_DNA"/>
</dbReference>
<dbReference type="RefSeq" id="WP_010956449.1">
    <property type="nucleotide sequence ID" value="NC_002950.2"/>
</dbReference>
<dbReference type="SMR" id="Q7MTL3"/>
<dbReference type="STRING" id="242619.PG_1938"/>
<dbReference type="EnsemblBacteria" id="AAQ66919">
    <property type="protein sequence ID" value="AAQ66919"/>
    <property type="gene ID" value="PG_1938"/>
</dbReference>
<dbReference type="GeneID" id="29257019"/>
<dbReference type="KEGG" id="pgi:PG_1938"/>
<dbReference type="eggNOG" id="COG0087">
    <property type="taxonomic scope" value="Bacteria"/>
</dbReference>
<dbReference type="HOGENOM" id="CLU_044142_4_1_10"/>
<dbReference type="Proteomes" id="UP000000588">
    <property type="component" value="Chromosome"/>
</dbReference>
<dbReference type="GO" id="GO:0022625">
    <property type="term" value="C:cytosolic large ribosomal subunit"/>
    <property type="evidence" value="ECO:0007669"/>
    <property type="project" value="TreeGrafter"/>
</dbReference>
<dbReference type="GO" id="GO:0019843">
    <property type="term" value="F:rRNA binding"/>
    <property type="evidence" value="ECO:0007669"/>
    <property type="project" value="UniProtKB-UniRule"/>
</dbReference>
<dbReference type="GO" id="GO:0003735">
    <property type="term" value="F:structural constituent of ribosome"/>
    <property type="evidence" value="ECO:0007669"/>
    <property type="project" value="InterPro"/>
</dbReference>
<dbReference type="GO" id="GO:0006412">
    <property type="term" value="P:translation"/>
    <property type="evidence" value="ECO:0007669"/>
    <property type="project" value="UniProtKB-UniRule"/>
</dbReference>
<dbReference type="FunFam" id="2.40.30.10:FF:000047">
    <property type="entry name" value="50S ribosomal protein L3"/>
    <property type="match status" value="1"/>
</dbReference>
<dbReference type="FunFam" id="3.30.160.810:FF:000001">
    <property type="entry name" value="50S ribosomal protein L3"/>
    <property type="match status" value="1"/>
</dbReference>
<dbReference type="Gene3D" id="3.30.160.810">
    <property type="match status" value="1"/>
</dbReference>
<dbReference type="Gene3D" id="2.40.30.10">
    <property type="entry name" value="Translation factors"/>
    <property type="match status" value="1"/>
</dbReference>
<dbReference type="HAMAP" id="MF_01325_B">
    <property type="entry name" value="Ribosomal_uL3_B"/>
    <property type="match status" value="1"/>
</dbReference>
<dbReference type="InterPro" id="IPR000597">
    <property type="entry name" value="Ribosomal_uL3"/>
</dbReference>
<dbReference type="InterPro" id="IPR019927">
    <property type="entry name" value="Ribosomal_uL3_bac/org-type"/>
</dbReference>
<dbReference type="InterPro" id="IPR019926">
    <property type="entry name" value="Ribosomal_uL3_CS"/>
</dbReference>
<dbReference type="InterPro" id="IPR009000">
    <property type="entry name" value="Transl_B-barrel_sf"/>
</dbReference>
<dbReference type="NCBIfam" id="TIGR03625">
    <property type="entry name" value="L3_bact"/>
    <property type="match status" value="1"/>
</dbReference>
<dbReference type="PANTHER" id="PTHR11229">
    <property type="entry name" value="50S RIBOSOMAL PROTEIN L3"/>
    <property type="match status" value="1"/>
</dbReference>
<dbReference type="PANTHER" id="PTHR11229:SF16">
    <property type="entry name" value="LARGE RIBOSOMAL SUBUNIT PROTEIN UL3C"/>
    <property type="match status" value="1"/>
</dbReference>
<dbReference type="Pfam" id="PF00297">
    <property type="entry name" value="Ribosomal_L3"/>
    <property type="match status" value="1"/>
</dbReference>
<dbReference type="SUPFAM" id="SSF50447">
    <property type="entry name" value="Translation proteins"/>
    <property type="match status" value="1"/>
</dbReference>
<dbReference type="PROSITE" id="PS00474">
    <property type="entry name" value="RIBOSOMAL_L3"/>
    <property type="match status" value="1"/>
</dbReference>
<keyword id="KW-1185">Reference proteome</keyword>
<keyword id="KW-0687">Ribonucleoprotein</keyword>
<keyword id="KW-0689">Ribosomal protein</keyword>
<keyword id="KW-0694">RNA-binding</keyword>
<keyword id="KW-0699">rRNA-binding</keyword>
<sequence>MPGLLGKKIGMTSVFSAEGKNLPCTVIEVGPCVVTQVKTLEKDGYSALQLGFVDAKEKHTTKPLAGHFKKANVAPKRHLAEFKNFEGEHKLGDVLNVEFFSDADFVDVVGTSKGKGFQGVVKRHGFGGVGQATHGQHNRLRAPGAVGACSYPAKVFKGTRMAGQMGNERVTVQNLEVIKVMPEHNLLLVKGSVPGAKGSILLIEK</sequence>
<feature type="chain" id="PRO_0000077134" description="Large ribosomal subunit protein uL3">
    <location>
        <begin position="1"/>
        <end position="205"/>
    </location>
</feature>
<accession>Q7MTL3</accession>
<protein>
    <recommendedName>
        <fullName evidence="1">Large ribosomal subunit protein uL3</fullName>
    </recommendedName>
    <alternativeName>
        <fullName evidence="2">50S ribosomal protein L3</fullName>
    </alternativeName>
</protein>
<proteinExistence type="inferred from homology"/>
<evidence type="ECO:0000255" key="1">
    <source>
        <dbReference type="HAMAP-Rule" id="MF_01325"/>
    </source>
</evidence>
<evidence type="ECO:0000305" key="2"/>
<gene>
    <name evidence="1" type="primary">rplC</name>
    <name type="ordered locus">PG_1938</name>
</gene>
<name>RL3_PORGI</name>